<dbReference type="EMBL" id="BX571721">
    <property type="protein sequence ID" value="CAQ14270.1"/>
    <property type="molecule type" value="Genomic_DNA"/>
</dbReference>
<dbReference type="EMBL" id="BC124550">
    <property type="protein sequence ID" value="AAI24551.1"/>
    <property type="molecule type" value="mRNA"/>
</dbReference>
<dbReference type="RefSeq" id="NP_001070076.1">
    <property type="nucleotide sequence ID" value="NM_001076608.1"/>
</dbReference>
<dbReference type="SMR" id="Q08BU8"/>
<dbReference type="FunCoup" id="Q08BU8">
    <property type="interactions" value="669"/>
</dbReference>
<dbReference type="STRING" id="7955.ENSDARP00000080008"/>
<dbReference type="PaxDb" id="7955-ENSDARP00000080008"/>
<dbReference type="Ensembl" id="ENSDART00000085573">
    <property type="protein sequence ID" value="ENSDARP00000080008"/>
    <property type="gene ID" value="ENSDARG00000060601"/>
</dbReference>
<dbReference type="GeneID" id="767669"/>
<dbReference type="KEGG" id="dre:767669"/>
<dbReference type="AGR" id="ZFIN:ZDB-GENE-060929-380"/>
<dbReference type="CTD" id="767669"/>
<dbReference type="ZFIN" id="ZDB-GENE-060929-380">
    <property type="gene designation" value="rgs7bpa"/>
</dbReference>
<dbReference type="eggNOG" id="ENOG502QPUF">
    <property type="taxonomic scope" value="Eukaryota"/>
</dbReference>
<dbReference type="HOGENOM" id="CLU_112711_0_0_1"/>
<dbReference type="InParanoid" id="Q08BU8"/>
<dbReference type="OMA" id="KDMRDMK"/>
<dbReference type="OrthoDB" id="9876293at2759"/>
<dbReference type="PhylomeDB" id="Q08BU8"/>
<dbReference type="TreeFam" id="TF330985"/>
<dbReference type="PRO" id="PR:Q08BU8"/>
<dbReference type="Proteomes" id="UP000000437">
    <property type="component" value="Chromosome 8"/>
</dbReference>
<dbReference type="Bgee" id="ENSDARG00000060601">
    <property type="expression patterns" value="Expressed in brain and 14 other cell types or tissues"/>
</dbReference>
<dbReference type="GO" id="GO:0005737">
    <property type="term" value="C:cytoplasm"/>
    <property type="evidence" value="ECO:0007669"/>
    <property type="project" value="UniProtKB-SubCell"/>
</dbReference>
<dbReference type="GO" id="GO:0043005">
    <property type="term" value="C:neuron projection"/>
    <property type="evidence" value="ECO:0000318"/>
    <property type="project" value="GO_Central"/>
</dbReference>
<dbReference type="GO" id="GO:0005634">
    <property type="term" value="C:nucleus"/>
    <property type="evidence" value="ECO:0000318"/>
    <property type="project" value="GO_Central"/>
</dbReference>
<dbReference type="GO" id="GO:0005886">
    <property type="term" value="C:plasma membrane"/>
    <property type="evidence" value="ECO:0007669"/>
    <property type="project" value="UniProtKB-SubCell"/>
</dbReference>
<dbReference type="GO" id="GO:0098794">
    <property type="term" value="C:postsynapse"/>
    <property type="evidence" value="ECO:0000318"/>
    <property type="project" value="GO_Central"/>
</dbReference>
<dbReference type="GO" id="GO:0007186">
    <property type="term" value="P:G protein-coupled receptor signaling pathway"/>
    <property type="evidence" value="ECO:0000318"/>
    <property type="project" value="GO_Central"/>
</dbReference>
<dbReference type="GO" id="GO:0009968">
    <property type="term" value="P:negative regulation of signal transduction"/>
    <property type="evidence" value="ECO:0007669"/>
    <property type="project" value="UniProtKB-KW"/>
</dbReference>
<dbReference type="InterPro" id="IPR026512">
    <property type="entry name" value="RGS7BP/RGS9BP"/>
</dbReference>
<dbReference type="PANTHER" id="PTHR21029">
    <property type="entry name" value="R-SEVEN BINDING PROTEIN (R7BP) HOMOLOG"/>
    <property type="match status" value="1"/>
</dbReference>
<name>R7BPA_DANRE</name>
<feature type="chain" id="PRO_0000287598" description="Regulator of G-protein signaling 7-binding protein A">
    <location>
        <begin position="1"/>
        <end position="248"/>
    </location>
</feature>
<feature type="region of interest" description="Disordered" evidence="3">
    <location>
        <begin position="1"/>
        <end position="32"/>
    </location>
</feature>
<feature type="lipid moiety-binding region" description="S-palmitoyl cysteine" evidence="1">
    <location>
        <position position="243"/>
    </location>
</feature>
<feature type="lipid moiety-binding region" description="S-palmitoyl cysteine" evidence="1">
    <location>
        <position position="244"/>
    </location>
</feature>
<feature type="sequence conflict" description="In Ref. 2; AAI24551." evidence="4" ref="2">
    <original>L</original>
    <variation>R</variation>
    <location>
        <position position="40"/>
    </location>
</feature>
<protein>
    <recommendedName>
        <fullName>Regulator of G-protein signaling 7-binding protein A</fullName>
    </recommendedName>
    <alternativeName>
        <fullName>R7 family-binding protein A</fullName>
    </alternativeName>
</protein>
<evidence type="ECO:0000250" key="1"/>
<evidence type="ECO:0000250" key="2">
    <source>
        <dbReference type="UniProtKB" id="Q8BQP9"/>
    </source>
</evidence>
<evidence type="ECO:0000256" key="3">
    <source>
        <dbReference type="SAM" id="MobiDB-lite"/>
    </source>
</evidence>
<evidence type="ECO:0000305" key="4"/>
<comment type="function">
    <text evidence="1">Regulator of G protein-coupled receptor (GPCR) signaling. Regulatory subunit of the R7-Gbeta5 complexes that acts by controlling the subcellular location of the R7-Gbeta5 complexes. When palmitoylated, it targets the R7-Gbeta5 complexes to the plasma membrane, leading to inhibit G protein alpha subunits. When it is unpalmitoylated, the R7-Gbeta5 complexes undergo a nuclear/cytoplasmic shuttling (By similarity).</text>
</comment>
<comment type="subcellular location">
    <subcellularLocation>
        <location evidence="1">Nucleus</location>
    </subcellularLocation>
    <subcellularLocation>
        <location evidence="1">Cytoplasm</location>
    </subcellularLocation>
    <subcellularLocation>
        <location evidence="1">Cell membrane</location>
        <topology evidence="1">Lipid-anchor</topology>
    </subcellularLocation>
</comment>
<comment type="PTM">
    <text evidence="2">Palmitoylated. Undergoes rapid palmitoylation turnover. Palmitoylation regulates the cell membrane and nuclear shuttling and the regulation of GPCR signaling. Upon depalmitoylation, it is targeted from the plasma membrane into the nucleus. GPCR signaling inhibits depalmitoylation and promotes localization to the plasma membrane.</text>
</comment>
<comment type="similarity">
    <text evidence="4">Belongs to the RGS7BP/RGS9BP family.</text>
</comment>
<organism>
    <name type="scientific">Danio rerio</name>
    <name type="common">Zebrafish</name>
    <name type="synonym">Brachydanio rerio</name>
    <dbReference type="NCBI Taxonomy" id="7955"/>
    <lineage>
        <taxon>Eukaryota</taxon>
        <taxon>Metazoa</taxon>
        <taxon>Chordata</taxon>
        <taxon>Craniata</taxon>
        <taxon>Vertebrata</taxon>
        <taxon>Euteleostomi</taxon>
        <taxon>Actinopterygii</taxon>
        <taxon>Neopterygii</taxon>
        <taxon>Teleostei</taxon>
        <taxon>Ostariophysi</taxon>
        <taxon>Cypriniformes</taxon>
        <taxon>Danionidae</taxon>
        <taxon>Danioninae</taxon>
        <taxon>Danio</taxon>
    </lineage>
</organism>
<sequence>MSSAPNGRKNRPRTAGTIFQIGGKAPSRESERRESSEALLAVSDCRMVVQEFNTLVALYRELVISIGEISADCPSLRAEMHKTRTKGCEMARTAHQNLSAISGPEDGEIHPEICRLFIQLQCCLEMYLTEMLKSVCLLGSLQLHRKGKHYLGATKLDSRKEDSSDIPILEDTSSTPPDCPHTYFLVATDIENIERDMTEMKNLLSKLRETMPLPLKNQDDSSLLNLAPYPMVRQRKRRFFGLCCLVSS</sequence>
<proteinExistence type="evidence at transcript level"/>
<keyword id="KW-1003">Cell membrane</keyword>
<keyword id="KW-0963">Cytoplasm</keyword>
<keyword id="KW-0449">Lipoprotein</keyword>
<keyword id="KW-0472">Membrane</keyword>
<keyword id="KW-0539">Nucleus</keyword>
<keyword id="KW-0564">Palmitate</keyword>
<keyword id="KW-1185">Reference proteome</keyword>
<keyword id="KW-0734">Signal transduction inhibitor</keyword>
<accession>Q08BU8</accession>
<accession>B0S6X3</accession>
<reference key="1">
    <citation type="journal article" date="2013" name="Nature">
        <title>The zebrafish reference genome sequence and its relationship to the human genome.</title>
        <authorList>
            <person name="Howe K."/>
            <person name="Clark M.D."/>
            <person name="Torroja C.F."/>
            <person name="Torrance J."/>
            <person name="Berthelot C."/>
            <person name="Muffato M."/>
            <person name="Collins J.E."/>
            <person name="Humphray S."/>
            <person name="McLaren K."/>
            <person name="Matthews L."/>
            <person name="McLaren S."/>
            <person name="Sealy I."/>
            <person name="Caccamo M."/>
            <person name="Churcher C."/>
            <person name="Scott C."/>
            <person name="Barrett J.C."/>
            <person name="Koch R."/>
            <person name="Rauch G.J."/>
            <person name="White S."/>
            <person name="Chow W."/>
            <person name="Kilian B."/>
            <person name="Quintais L.T."/>
            <person name="Guerra-Assuncao J.A."/>
            <person name="Zhou Y."/>
            <person name="Gu Y."/>
            <person name="Yen J."/>
            <person name="Vogel J.H."/>
            <person name="Eyre T."/>
            <person name="Redmond S."/>
            <person name="Banerjee R."/>
            <person name="Chi J."/>
            <person name="Fu B."/>
            <person name="Langley E."/>
            <person name="Maguire S.F."/>
            <person name="Laird G.K."/>
            <person name="Lloyd D."/>
            <person name="Kenyon E."/>
            <person name="Donaldson S."/>
            <person name="Sehra H."/>
            <person name="Almeida-King J."/>
            <person name="Loveland J."/>
            <person name="Trevanion S."/>
            <person name="Jones M."/>
            <person name="Quail M."/>
            <person name="Willey D."/>
            <person name="Hunt A."/>
            <person name="Burton J."/>
            <person name="Sims S."/>
            <person name="McLay K."/>
            <person name="Plumb B."/>
            <person name="Davis J."/>
            <person name="Clee C."/>
            <person name="Oliver K."/>
            <person name="Clark R."/>
            <person name="Riddle C."/>
            <person name="Elliot D."/>
            <person name="Threadgold G."/>
            <person name="Harden G."/>
            <person name="Ware D."/>
            <person name="Begum S."/>
            <person name="Mortimore B."/>
            <person name="Kerry G."/>
            <person name="Heath P."/>
            <person name="Phillimore B."/>
            <person name="Tracey A."/>
            <person name="Corby N."/>
            <person name="Dunn M."/>
            <person name="Johnson C."/>
            <person name="Wood J."/>
            <person name="Clark S."/>
            <person name="Pelan S."/>
            <person name="Griffiths G."/>
            <person name="Smith M."/>
            <person name="Glithero R."/>
            <person name="Howden P."/>
            <person name="Barker N."/>
            <person name="Lloyd C."/>
            <person name="Stevens C."/>
            <person name="Harley J."/>
            <person name="Holt K."/>
            <person name="Panagiotidis G."/>
            <person name="Lovell J."/>
            <person name="Beasley H."/>
            <person name="Henderson C."/>
            <person name="Gordon D."/>
            <person name="Auger K."/>
            <person name="Wright D."/>
            <person name="Collins J."/>
            <person name="Raisen C."/>
            <person name="Dyer L."/>
            <person name="Leung K."/>
            <person name="Robertson L."/>
            <person name="Ambridge K."/>
            <person name="Leongamornlert D."/>
            <person name="McGuire S."/>
            <person name="Gilderthorp R."/>
            <person name="Griffiths C."/>
            <person name="Manthravadi D."/>
            <person name="Nichol S."/>
            <person name="Barker G."/>
            <person name="Whitehead S."/>
            <person name="Kay M."/>
            <person name="Brown J."/>
            <person name="Murnane C."/>
            <person name="Gray E."/>
            <person name="Humphries M."/>
            <person name="Sycamore N."/>
            <person name="Barker D."/>
            <person name="Saunders D."/>
            <person name="Wallis J."/>
            <person name="Babbage A."/>
            <person name="Hammond S."/>
            <person name="Mashreghi-Mohammadi M."/>
            <person name="Barr L."/>
            <person name="Martin S."/>
            <person name="Wray P."/>
            <person name="Ellington A."/>
            <person name="Matthews N."/>
            <person name="Ellwood M."/>
            <person name="Woodmansey R."/>
            <person name="Clark G."/>
            <person name="Cooper J."/>
            <person name="Tromans A."/>
            <person name="Grafham D."/>
            <person name="Skuce C."/>
            <person name="Pandian R."/>
            <person name="Andrews R."/>
            <person name="Harrison E."/>
            <person name="Kimberley A."/>
            <person name="Garnett J."/>
            <person name="Fosker N."/>
            <person name="Hall R."/>
            <person name="Garner P."/>
            <person name="Kelly D."/>
            <person name="Bird C."/>
            <person name="Palmer S."/>
            <person name="Gehring I."/>
            <person name="Berger A."/>
            <person name="Dooley C.M."/>
            <person name="Ersan-Urun Z."/>
            <person name="Eser C."/>
            <person name="Geiger H."/>
            <person name="Geisler M."/>
            <person name="Karotki L."/>
            <person name="Kirn A."/>
            <person name="Konantz J."/>
            <person name="Konantz M."/>
            <person name="Oberlander M."/>
            <person name="Rudolph-Geiger S."/>
            <person name="Teucke M."/>
            <person name="Lanz C."/>
            <person name="Raddatz G."/>
            <person name="Osoegawa K."/>
            <person name="Zhu B."/>
            <person name="Rapp A."/>
            <person name="Widaa S."/>
            <person name="Langford C."/>
            <person name="Yang F."/>
            <person name="Schuster S.C."/>
            <person name="Carter N.P."/>
            <person name="Harrow J."/>
            <person name="Ning Z."/>
            <person name="Herrero J."/>
            <person name="Searle S.M."/>
            <person name="Enright A."/>
            <person name="Geisler R."/>
            <person name="Plasterk R.H."/>
            <person name="Lee C."/>
            <person name="Westerfield M."/>
            <person name="de Jong P.J."/>
            <person name="Zon L.I."/>
            <person name="Postlethwait J.H."/>
            <person name="Nusslein-Volhard C."/>
            <person name="Hubbard T.J."/>
            <person name="Roest Crollius H."/>
            <person name="Rogers J."/>
            <person name="Stemple D.L."/>
        </authorList>
    </citation>
    <scope>NUCLEOTIDE SEQUENCE [LARGE SCALE GENOMIC DNA]</scope>
    <source>
        <strain>Tuebingen</strain>
    </source>
</reference>
<reference key="2">
    <citation type="submission" date="2006-09" db="EMBL/GenBank/DDBJ databases">
        <authorList>
            <consortium name="NIH - Zebrafish Gene Collection (ZGC) project"/>
        </authorList>
    </citation>
    <scope>NUCLEOTIDE SEQUENCE [LARGE SCALE MRNA]</scope>
</reference>
<gene>
    <name type="primary">rgs7bpa</name>
    <name type="ORF">si:dkey-250l23.3</name>
    <name type="ORF">zgc:154140</name>
</gene>